<accession>B0TNT3</accession>
<feature type="chain" id="PRO_1000074065" description="LexA repressor">
    <location>
        <begin position="1"/>
        <end position="206"/>
    </location>
</feature>
<feature type="DNA-binding region" description="H-T-H motif" evidence="1">
    <location>
        <begin position="28"/>
        <end position="48"/>
    </location>
</feature>
<feature type="active site" description="For autocatalytic cleavage activity" evidence="1">
    <location>
        <position position="123"/>
    </location>
</feature>
<feature type="active site" description="For autocatalytic cleavage activity" evidence="1">
    <location>
        <position position="160"/>
    </location>
</feature>
<feature type="site" description="Cleavage; by autolysis" evidence="1">
    <location>
        <begin position="88"/>
        <end position="89"/>
    </location>
</feature>
<evidence type="ECO:0000255" key="1">
    <source>
        <dbReference type="HAMAP-Rule" id="MF_00015"/>
    </source>
</evidence>
<organism>
    <name type="scientific">Shewanella halifaxensis (strain HAW-EB4)</name>
    <dbReference type="NCBI Taxonomy" id="458817"/>
    <lineage>
        <taxon>Bacteria</taxon>
        <taxon>Pseudomonadati</taxon>
        <taxon>Pseudomonadota</taxon>
        <taxon>Gammaproteobacteria</taxon>
        <taxon>Alteromonadales</taxon>
        <taxon>Shewanellaceae</taxon>
        <taxon>Shewanella</taxon>
    </lineage>
</organism>
<keyword id="KW-0068">Autocatalytic cleavage</keyword>
<keyword id="KW-0227">DNA damage</keyword>
<keyword id="KW-0234">DNA repair</keyword>
<keyword id="KW-0235">DNA replication</keyword>
<keyword id="KW-0238">DNA-binding</keyword>
<keyword id="KW-0378">Hydrolase</keyword>
<keyword id="KW-0678">Repressor</keyword>
<keyword id="KW-0742">SOS response</keyword>
<keyword id="KW-0804">Transcription</keyword>
<keyword id="KW-0805">Transcription regulation</keyword>
<proteinExistence type="inferred from homology"/>
<reference key="1">
    <citation type="submission" date="2008-01" db="EMBL/GenBank/DDBJ databases">
        <title>Complete sequence of Shewanella halifaxensis HAW-EB4.</title>
        <authorList>
            <consortium name="US DOE Joint Genome Institute"/>
            <person name="Copeland A."/>
            <person name="Lucas S."/>
            <person name="Lapidus A."/>
            <person name="Glavina del Rio T."/>
            <person name="Dalin E."/>
            <person name="Tice H."/>
            <person name="Bruce D."/>
            <person name="Goodwin L."/>
            <person name="Pitluck S."/>
            <person name="Sims D."/>
            <person name="Brettin T."/>
            <person name="Detter J.C."/>
            <person name="Han C."/>
            <person name="Kuske C.R."/>
            <person name="Schmutz J."/>
            <person name="Larimer F."/>
            <person name="Land M."/>
            <person name="Hauser L."/>
            <person name="Kyrpides N."/>
            <person name="Kim E."/>
            <person name="Zhao J.-S."/>
            <person name="Richardson P."/>
        </authorList>
    </citation>
    <scope>NUCLEOTIDE SEQUENCE [LARGE SCALE GENOMIC DNA]</scope>
    <source>
        <strain>HAW-EB4</strain>
    </source>
</reference>
<sequence>MRPLTPRQAEILELIKRNIADTGMPPTRAEIARRLGFKSANAAEEHLKALAKKGCIEIMPGTSRGIKLTQENTEDADLGLPLIGQVAAGEPILAQEHVEQHYKVDPAMFKPSADFLLRVRGDSMKNIGILEGDLLAVHKIQQARNGQIVVARVEDDVTVKRFEKKGNKVFLHAENEEYSPIEVDLANQSLSIEGLAVGVIRNGDWQ</sequence>
<gene>
    <name evidence="1" type="primary">lexA</name>
    <name type="ordered locus">Shal_0260</name>
</gene>
<protein>
    <recommendedName>
        <fullName evidence="1">LexA repressor</fullName>
        <ecNumber evidence="1">3.4.21.88</ecNumber>
    </recommendedName>
</protein>
<comment type="function">
    <text evidence="1">Represses a number of genes involved in the response to DNA damage (SOS response), including recA and lexA. In the presence of single-stranded DNA, RecA interacts with LexA causing an autocatalytic cleavage which disrupts the DNA-binding part of LexA, leading to derepression of the SOS regulon and eventually DNA repair.</text>
</comment>
<comment type="catalytic activity">
    <reaction evidence="1">
        <text>Hydrolysis of Ala-|-Gly bond in repressor LexA.</text>
        <dbReference type="EC" id="3.4.21.88"/>
    </reaction>
</comment>
<comment type="subunit">
    <text evidence="1">Homodimer.</text>
</comment>
<comment type="similarity">
    <text evidence="1">Belongs to the peptidase S24 family.</text>
</comment>
<dbReference type="EC" id="3.4.21.88" evidence="1"/>
<dbReference type="EMBL" id="CP000931">
    <property type="protein sequence ID" value="ABZ74836.1"/>
    <property type="molecule type" value="Genomic_DNA"/>
</dbReference>
<dbReference type="RefSeq" id="WP_012275391.1">
    <property type="nucleotide sequence ID" value="NC_010334.1"/>
</dbReference>
<dbReference type="SMR" id="B0TNT3"/>
<dbReference type="STRING" id="458817.Shal_0260"/>
<dbReference type="MEROPS" id="S24.001"/>
<dbReference type="KEGG" id="shl:Shal_0260"/>
<dbReference type="eggNOG" id="COG1974">
    <property type="taxonomic scope" value="Bacteria"/>
</dbReference>
<dbReference type="HOGENOM" id="CLU_066192_45_3_6"/>
<dbReference type="OrthoDB" id="9802364at2"/>
<dbReference type="Proteomes" id="UP000001317">
    <property type="component" value="Chromosome"/>
</dbReference>
<dbReference type="GO" id="GO:0003677">
    <property type="term" value="F:DNA binding"/>
    <property type="evidence" value="ECO:0007669"/>
    <property type="project" value="UniProtKB-UniRule"/>
</dbReference>
<dbReference type="GO" id="GO:0004252">
    <property type="term" value="F:serine-type endopeptidase activity"/>
    <property type="evidence" value="ECO:0007669"/>
    <property type="project" value="UniProtKB-UniRule"/>
</dbReference>
<dbReference type="GO" id="GO:0006281">
    <property type="term" value="P:DNA repair"/>
    <property type="evidence" value="ECO:0007669"/>
    <property type="project" value="UniProtKB-UniRule"/>
</dbReference>
<dbReference type="GO" id="GO:0006260">
    <property type="term" value="P:DNA replication"/>
    <property type="evidence" value="ECO:0007669"/>
    <property type="project" value="UniProtKB-UniRule"/>
</dbReference>
<dbReference type="GO" id="GO:0045892">
    <property type="term" value="P:negative regulation of DNA-templated transcription"/>
    <property type="evidence" value="ECO:0007669"/>
    <property type="project" value="UniProtKB-UniRule"/>
</dbReference>
<dbReference type="GO" id="GO:0006508">
    <property type="term" value="P:proteolysis"/>
    <property type="evidence" value="ECO:0007669"/>
    <property type="project" value="InterPro"/>
</dbReference>
<dbReference type="GO" id="GO:0009432">
    <property type="term" value="P:SOS response"/>
    <property type="evidence" value="ECO:0007669"/>
    <property type="project" value="UniProtKB-UniRule"/>
</dbReference>
<dbReference type="CDD" id="cd06529">
    <property type="entry name" value="S24_LexA-like"/>
    <property type="match status" value="1"/>
</dbReference>
<dbReference type="FunFam" id="1.10.10.10:FF:000009">
    <property type="entry name" value="LexA repressor"/>
    <property type="match status" value="1"/>
</dbReference>
<dbReference type="FunFam" id="2.10.109.10:FF:000001">
    <property type="entry name" value="LexA repressor"/>
    <property type="match status" value="1"/>
</dbReference>
<dbReference type="Gene3D" id="2.10.109.10">
    <property type="entry name" value="Umud Fragment, subunit A"/>
    <property type="match status" value="1"/>
</dbReference>
<dbReference type="Gene3D" id="1.10.10.10">
    <property type="entry name" value="Winged helix-like DNA-binding domain superfamily/Winged helix DNA-binding domain"/>
    <property type="match status" value="1"/>
</dbReference>
<dbReference type="HAMAP" id="MF_00015">
    <property type="entry name" value="LexA"/>
    <property type="match status" value="1"/>
</dbReference>
<dbReference type="InterPro" id="IPR006200">
    <property type="entry name" value="LexA"/>
</dbReference>
<dbReference type="InterPro" id="IPR039418">
    <property type="entry name" value="LexA-like"/>
</dbReference>
<dbReference type="InterPro" id="IPR036286">
    <property type="entry name" value="LexA/Signal_pep-like_sf"/>
</dbReference>
<dbReference type="InterPro" id="IPR006199">
    <property type="entry name" value="LexA_DNA-bd_dom"/>
</dbReference>
<dbReference type="InterPro" id="IPR050077">
    <property type="entry name" value="LexA_repressor"/>
</dbReference>
<dbReference type="InterPro" id="IPR006197">
    <property type="entry name" value="Peptidase_S24_LexA"/>
</dbReference>
<dbReference type="InterPro" id="IPR015927">
    <property type="entry name" value="Peptidase_S24_S26A/B/C"/>
</dbReference>
<dbReference type="InterPro" id="IPR036388">
    <property type="entry name" value="WH-like_DNA-bd_sf"/>
</dbReference>
<dbReference type="InterPro" id="IPR036390">
    <property type="entry name" value="WH_DNA-bd_sf"/>
</dbReference>
<dbReference type="NCBIfam" id="TIGR00498">
    <property type="entry name" value="lexA"/>
    <property type="match status" value="1"/>
</dbReference>
<dbReference type="PANTHER" id="PTHR33516">
    <property type="entry name" value="LEXA REPRESSOR"/>
    <property type="match status" value="1"/>
</dbReference>
<dbReference type="PANTHER" id="PTHR33516:SF2">
    <property type="entry name" value="LEXA REPRESSOR-RELATED"/>
    <property type="match status" value="1"/>
</dbReference>
<dbReference type="Pfam" id="PF01726">
    <property type="entry name" value="LexA_DNA_bind"/>
    <property type="match status" value="1"/>
</dbReference>
<dbReference type="Pfam" id="PF00717">
    <property type="entry name" value="Peptidase_S24"/>
    <property type="match status" value="1"/>
</dbReference>
<dbReference type="PRINTS" id="PR00726">
    <property type="entry name" value="LEXASERPTASE"/>
</dbReference>
<dbReference type="SUPFAM" id="SSF51306">
    <property type="entry name" value="LexA/Signal peptidase"/>
    <property type="match status" value="1"/>
</dbReference>
<dbReference type="SUPFAM" id="SSF46785">
    <property type="entry name" value="Winged helix' DNA-binding domain"/>
    <property type="match status" value="1"/>
</dbReference>
<name>LEXA_SHEHH</name>